<accession>A1CVQ6</accession>
<reference key="1">
    <citation type="journal article" date="2008" name="PLoS Genet.">
        <title>Genomic islands in the pathogenic filamentous fungus Aspergillus fumigatus.</title>
        <authorList>
            <person name="Fedorova N.D."/>
            <person name="Khaldi N."/>
            <person name="Joardar V.S."/>
            <person name="Maiti R."/>
            <person name="Amedeo P."/>
            <person name="Anderson M.J."/>
            <person name="Crabtree J."/>
            <person name="Silva J.C."/>
            <person name="Badger J.H."/>
            <person name="Albarraq A."/>
            <person name="Angiuoli S."/>
            <person name="Bussey H."/>
            <person name="Bowyer P."/>
            <person name="Cotty P.J."/>
            <person name="Dyer P.S."/>
            <person name="Egan A."/>
            <person name="Galens K."/>
            <person name="Fraser-Liggett C.M."/>
            <person name="Haas B.J."/>
            <person name="Inman J.M."/>
            <person name="Kent R."/>
            <person name="Lemieux S."/>
            <person name="Malavazi I."/>
            <person name="Orvis J."/>
            <person name="Roemer T."/>
            <person name="Ronning C.M."/>
            <person name="Sundaram J.P."/>
            <person name="Sutton G."/>
            <person name="Turner G."/>
            <person name="Venter J.C."/>
            <person name="White O.R."/>
            <person name="Whitty B.R."/>
            <person name="Youngman P."/>
            <person name="Wolfe K.H."/>
            <person name="Goldman G.H."/>
            <person name="Wortman J.R."/>
            <person name="Jiang B."/>
            <person name="Denning D.W."/>
            <person name="Nierman W.C."/>
        </authorList>
    </citation>
    <scope>NUCLEOTIDE SEQUENCE [LARGE SCALE GENOMIC DNA]</scope>
    <source>
        <strain>ATCC 1020 / DSM 3700 / CBS 544.65 / FGSC A1164 / JCM 1740 / NRRL 181 / WB 181</strain>
    </source>
</reference>
<sequence length="502" mass="56355">MAPLKLNSKNLSQIAAAGGALVKIPTYQRGRAVKEGIVHIGVGGFHRAHLAVYIDQLMQKHGVTDYAICGVGLQPFDSAMRDALASQDHLYTLIERSAKGSFAHVIGSINSYLFAPDNREAVIAKMAHPDTKIVSLTITESGYYYNENTHELQSEHPDIQFDLDPANEKAPRTTFGFLYAGLTRRYQQGLKPFTVMSCDNMQKNGSITRHMLESFARLRNPEVAEWIAEEGAFPNAMVDRITPQTSENDKTALADTFGIVDSWPVVTEPFTQWVIEDQFSNGRPPFEKVGVQVVKDVHAVEQFEKHKLRLLNGSHSALGYPGQLAGFKYVHEVMENPLFRKFVWQMMQEEVKPLLPEIPGVNIDEYCNTLIERFTNPTIMDQLPRICLNASGKIPQFIMPSIAEAIWVTGPFRRLCFVAAAWFHYVKGVDDSGKPFEVVDPMREELQAKARAGGNDPFELLSIKSLFGDDLRSDERFLKEITTAMNDIARDGIMKTLPKYID</sequence>
<name>M2DH_NEOFI</name>
<keyword id="KW-0520">NAD</keyword>
<keyword id="KW-0560">Oxidoreductase</keyword>
<keyword id="KW-1185">Reference proteome</keyword>
<protein>
    <recommendedName>
        <fullName>Mannitol 2-dehydrogenase</fullName>
        <shortName>M2DH</shortName>
        <shortName>MDH</shortName>
        <ecNumber>1.1.1.67</ecNumber>
    </recommendedName>
</protein>
<gene>
    <name type="ORF">NFIA_101920</name>
</gene>
<comment type="function">
    <text evidence="1">Catalyzes the NAD(H)-dependent interconversion of D-fructose and D-mannitol in the mannitol metabolic pathway.</text>
</comment>
<comment type="catalytic activity">
    <reaction>
        <text>D-mannitol + NAD(+) = D-fructose + NADH + H(+)</text>
        <dbReference type="Rhea" id="RHEA:12084"/>
        <dbReference type="ChEBI" id="CHEBI:15378"/>
        <dbReference type="ChEBI" id="CHEBI:16899"/>
        <dbReference type="ChEBI" id="CHEBI:37721"/>
        <dbReference type="ChEBI" id="CHEBI:57540"/>
        <dbReference type="ChEBI" id="CHEBI:57945"/>
        <dbReference type="EC" id="1.1.1.67"/>
    </reaction>
</comment>
<comment type="subunit">
    <text evidence="1">Monomer.</text>
</comment>
<comment type="similarity">
    <text evidence="2">Belongs to the mannitol dehydrogenase family.</text>
</comment>
<proteinExistence type="inferred from homology"/>
<evidence type="ECO:0000250" key="1"/>
<evidence type="ECO:0000305" key="2"/>
<dbReference type="EC" id="1.1.1.67"/>
<dbReference type="EMBL" id="DS027685">
    <property type="protein sequence ID" value="EAW24708.1"/>
    <property type="molecule type" value="Genomic_DNA"/>
</dbReference>
<dbReference type="RefSeq" id="XP_001266605.1">
    <property type="nucleotide sequence ID" value="XM_001266604.1"/>
</dbReference>
<dbReference type="SMR" id="A1CVQ6"/>
<dbReference type="STRING" id="331117.A1CVQ6"/>
<dbReference type="EnsemblFungi" id="EAW24708">
    <property type="protein sequence ID" value="EAW24708"/>
    <property type="gene ID" value="NFIA_101920"/>
</dbReference>
<dbReference type="GeneID" id="4593956"/>
<dbReference type="KEGG" id="nfi:NFIA_101920"/>
<dbReference type="VEuPathDB" id="FungiDB:NFIA_101920"/>
<dbReference type="eggNOG" id="ENOG502QT30">
    <property type="taxonomic scope" value="Eukaryota"/>
</dbReference>
<dbReference type="HOGENOM" id="CLU_027324_0_1_1"/>
<dbReference type="OMA" id="IVASWAR"/>
<dbReference type="OrthoDB" id="418169at2759"/>
<dbReference type="Proteomes" id="UP000006702">
    <property type="component" value="Unassembled WGS sequence"/>
</dbReference>
<dbReference type="GO" id="GO:0050086">
    <property type="term" value="F:mannitol 2-dehydrogenase activity"/>
    <property type="evidence" value="ECO:0007669"/>
    <property type="project" value="UniProtKB-EC"/>
</dbReference>
<dbReference type="GO" id="GO:0046029">
    <property type="term" value="F:mannitol dehydrogenase activity"/>
    <property type="evidence" value="ECO:0007669"/>
    <property type="project" value="TreeGrafter"/>
</dbReference>
<dbReference type="FunFam" id="3.40.50.720:FF:000129">
    <property type="entry name" value="D-mannonate oxidoreductase"/>
    <property type="match status" value="1"/>
</dbReference>
<dbReference type="FunFam" id="1.10.1040.10:FF:000028">
    <property type="entry name" value="Mannitol 2-dehydrogenase"/>
    <property type="match status" value="1"/>
</dbReference>
<dbReference type="Gene3D" id="1.10.1040.10">
    <property type="entry name" value="N-(1-d-carboxylethyl)-l-norvaline Dehydrogenase, domain 2"/>
    <property type="match status" value="1"/>
</dbReference>
<dbReference type="Gene3D" id="3.40.50.720">
    <property type="entry name" value="NAD(P)-binding Rossmann-like Domain"/>
    <property type="match status" value="1"/>
</dbReference>
<dbReference type="InterPro" id="IPR008927">
    <property type="entry name" value="6-PGluconate_DH-like_C_sf"/>
</dbReference>
<dbReference type="InterPro" id="IPR013328">
    <property type="entry name" value="6PGD_dom2"/>
</dbReference>
<dbReference type="InterPro" id="IPR000669">
    <property type="entry name" value="Mannitol_DH"/>
</dbReference>
<dbReference type="InterPro" id="IPR050988">
    <property type="entry name" value="Mannitol_DH/Oxidoreductase"/>
</dbReference>
<dbReference type="InterPro" id="IPR013118">
    <property type="entry name" value="Mannitol_DH_C"/>
</dbReference>
<dbReference type="InterPro" id="IPR013131">
    <property type="entry name" value="Mannitol_DH_N"/>
</dbReference>
<dbReference type="InterPro" id="IPR036291">
    <property type="entry name" value="NAD(P)-bd_dom_sf"/>
</dbReference>
<dbReference type="PANTHER" id="PTHR43362:SF1">
    <property type="entry name" value="MANNITOL DEHYDROGENASE 2-RELATED"/>
    <property type="match status" value="1"/>
</dbReference>
<dbReference type="PANTHER" id="PTHR43362">
    <property type="entry name" value="MANNITOL DEHYDROGENASE DSF1-RELATED"/>
    <property type="match status" value="1"/>
</dbReference>
<dbReference type="Pfam" id="PF01232">
    <property type="entry name" value="Mannitol_dh"/>
    <property type="match status" value="1"/>
</dbReference>
<dbReference type="Pfam" id="PF08125">
    <property type="entry name" value="Mannitol_dh_C"/>
    <property type="match status" value="1"/>
</dbReference>
<dbReference type="PRINTS" id="PR00084">
    <property type="entry name" value="MTLDHDRGNASE"/>
</dbReference>
<dbReference type="SUPFAM" id="SSF48179">
    <property type="entry name" value="6-phosphogluconate dehydrogenase C-terminal domain-like"/>
    <property type="match status" value="1"/>
</dbReference>
<dbReference type="SUPFAM" id="SSF51735">
    <property type="entry name" value="NAD(P)-binding Rossmann-fold domains"/>
    <property type="match status" value="1"/>
</dbReference>
<feature type="chain" id="PRO_0000371546" description="Mannitol 2-dehydrogenase">
    <location>
        <begin position="1"/>
        <end position="502"/>
    </location>
</feature>
<feature type="binding site" evidence="1">
    <location>
        <begin position="37"/>
        <end position="48"/>
    </location>
    <ligand>
        <name>NAD(+)</name>
        <dbReference type="ChEBI" id="CHEBI:57540"/>
    </ligand>
</feature>
<organism>
    <name type="scientific">Neosartorya fischeri (strain ATCC 1020 / DSM 3700 / CBS 544.65 / FGSC A1164 / JCM 1740 / NRRL 181 / WB 181)</name>
    <name type="common">Aspergillus fischerianus</name>
    <dbReference type="NCBI Taxonomy" id="331117"/>
    <lineage>
        <taxon>Eukaryota</taxon>
        <taxon>Fungi</taxon>
        <taxon>Dikarya</taxon>
        <taxon>Ascomycota</taxon>
        <taxon>Pezizomycotina</taxon>
        <taxon>Eurotiomycetes</taxon>
        <taxon>Eurotiomycetidae</taxon>
        <taxon>Eurotiales</taxon>
        <taxon>Aspergillaceae</taxon>
        <taxon>Aspergillus</taxon>
        <taxon>Aspergillus subgen. Fumigati</taxon>
    </lineage>
</organism>